<sequence>MSQHPDINTNVDATSLTDDQKSLDTNATSGNEVAPDGNKHIRIVNTFMKRRTHMNKNAELALTAPEFAHYLVNNSFGDGNLEGIDDLRALFAELPNGSEAPLTLEIGFGLGDSFIEMAAAEPSRNFVGIEVHEPGIGKCAYMAGTQNLSNVRIINGDAIQLLKQLPENHIDRIQLYFPDPWQKKRHHKRRFVSPERMAIVTRSLKQGGWFHTATDWEHYAFWMVEVLDGFVGLSNQAGAGNFTSRPDFRPMTKFERRGLASGHGVWDLIYLKD</sequence>
<keyword id="KW-0489">Methyltransferase</keyword>
<keyword id="KW-0949">S-adenosyl-L-methionine</keyword>
<keyword id="KW-0808">Transferase</keyword>
<keyword id="KW-0819">tRNA processing</keyword>
<accession>Q1Q963</accession>
<comment type="function">
    <text evidence="2">Catalyzes the formation of N(7)-methylguanine at position 46 (m7G46) in tRNA.</text>
</comment>
<comment type="catalytic activity">
    <reaction evidence="2">
        <text>guanosine(46) in tRNA + S-adenosyl-L-methionine = N(7)-methylguanosine(46) in tRNA + S-adenosyl-L-homocysteine</text>
        <dbReference type="Rhea" id="RHEA:42708"/>
        <dbReference type="Rhea" id="RHEA-COMP:10188"/>
        <dbReference type="Rhea" id="RHEA-COMP:10189"/>
        <dbReference type="ChEBI" id="CHEBI:57856"/>
        <dbReference type="ChEBI" id="CHEBI:59789"/>
        <dbReference type="ChEBI" id="CHEBI:74269"/>
        <dbReference type="ChEBI" id="CHEBI:74480"/>
        <dbReference type="EC" id="2.1.1.33"/>
    </reaction>
</comment>
<comment type="pathway">
    <text evidence="2">tRNA modification; N(7)-methylguanine-tRNA biosynthesis.</text>
</comment>
<comment type="similarity">
    <text evidence="2">Belongs to the class I-like SAM-binding methyltransferase superfamily. TrmB family.</text>
</comment>
<name>TRMB_PSYCK</name>
<gene>
    <name evidence="2" type="primary">trmB</name>
    <name type="ordered locus">Pcryo_2013</name>
</gene>
<reference key="1">
    <citation type="submission" date="2006-03" db="EMBL/GenBank/DDBJ databases">
        <title>Complete sequence of chromosome of Psychrobacter cryohalolentis K5.</title>
        <authorList>
            <consortium name="US DOE Joint Genome Institute"/>
            <person name="Copeland A."/>
            <person name="Lucas S."/>
            <person name="Lapidus A."/>
            <person name="Barry K."/>
            <person name="Detter J.C."/>
            <person name="Glavina T."/>
            <person name="Hammon N."/>
            <person name="Israni S."/>
            <person name="Dalin E."/>
            <person name="Tice H."/>
            <person name="Pitluck S."/>
            <person name="Brettin T."/>
            <person name="Bruce D."/>
            <person name="Han C."/>
            <person name="Tapia R."/>
            <person name="Sims D.R."/>
            <person name="Gilna P."/>
            <person name="Schmutz J."/>
            <person name="Larimer F."/>
            <person name="Land M."/>
            <person name="Hauser L."/>
            <person name="Kyrpides N."/>
            <person name="Kim E."/>
            <person name="Richardson P."/>
        </authorList>
    </citation>
    <scope>NUCLEOTIDE SEQUENCE [LARGE SCALE GENOMIC DNA]</scope>
    <source>
        <strain>ATCC BAA-1226 / DSM 17306 / VKM B-2378 / K5</strain>
    </source>
</reference>
<dbReference type="EC" id="2.1.1.33" evidence="2"/>
<dbReference type="EMBL" id="CP000323">
    <property type="protein sequence ID" value="ABE75790.1"/>
    <property type="molecule type" value="Genomic_DNA"/>
</dbReference>
<dbReference type="RefSeq" id="WP_011514330.1">
    <property type="nucleotide sequence ID" value="NC_007969.1"/>
</dbReference>
<dbReference type="SMR" id="Q1Q963"/>
<dbReference type="STRING" id="335284.Pcryo_2013"/>
<dbReference type="KEGG" id="pcr:Pcryo_2013"/>
<dbReference type="eggNOG" id="COG0220">
    <property type="taxonomic scope" value="Bacteria"/>
</dbReference>
<dbReference type="HOGENOM" id="CLU_050910_0_1_6"/>
<dbReference type="UniPathway" id="UPA00989"/>
<dbReference type="Proteomes" id="UP000002425">
    <property type="component" value="Chromosome"/>
</dbReference>
<dbReference type="GO" id="GO:0043527">
    <property type="term" value="C:tRNA methyltransferase complex"/>
    <property type="evidence" value="ECO:0007669"/>
    <property type="project" value="TreeGrafter"/>
</dbReference>
<dbReference type="GO" id="GO:0008176">
    <property type="term" value="F:tRNA (guanine(46)-N7)-methyltransferase activity"/>
    <property type="evidence" value="ECO:0007669"/>
    <property type="project" value="UniProtKB-UniRule"/>
</dbReference>
<dbReference type="CDD" id="cd02440">
    <property type="entry name" value="AdoMet_MTases"/>
    <property type="match status" value="1"/>
</dbReference>
<dbReference type="Gene3D" id="3.40.50.150">
    <property type="entry name" value="Vaccinia Virus protein VP39"/>
    <property type="match status" value="1"/>
</dbReference>
<dbReference type="HAMAP" id="MF_01057">
    <property type="entry name" value="tRNA_methyltr_TrmB"/>
    <property type="match status" value="1"/>
</dbReference>
<dbReference type="InterPro" id="IPR029063">
    <property type="entry name" value="SAM-dependent_MTases_sf"/>
</dbReference>
<dbReference type="InterPro" id="IPR003358">
    <property type="entry name" value="tRNA_(Gua-N-7)_MeTrfase_Trmb"/>
</dbReference>
<dbReference type="InterPro" id="IPR055361">
    <property type="entry name" value="tRNA_methyltr_TrmB_bact"/>
</dbReference>
<dbReference type="NCBIfam" id="TIGR00091">
    <property type="entry name" value="tRNA (guanosine(46)-N7)-methyltransferase TrmB"/>
    <property type="match status" value="1"/>
</dbReference>
<dbReference type="PANTHER" id="PTHR23417">
    <property type="entry name" value="3-DEOXY-D-MANNO-OCTULOSONIC-ACID TRANSFERASE/TRNA GUANINE-N 7 - -METHYLTRANSFERASE"/>
    <property type="match status" value="1"/>
</dbReference>
<dbReference type="PANTHER" id="PTHR23417:SF14">
    <property type="entry name" value="PENTACOTRIPEPTIDE-REPEAT REGION OF PRORP DOMAIN-CONTAINING PROTEIN"/>
    <property type="match status" value="1"/>
</dbReference>
<dbReference type="Pfam" id="PF02390">
    <property type="entry name" value="Methyltransf_4"/>
    <property type="match status" value="1"/>
</dbReference>
<dbReference type="SUPFAM" id="SSF53335">
    <property type="entry name" value="S-adenosyl-L-methionine-dependent methyltransferases"/>
    <property type="match status" value="1"/>
</dbReference>
<dbReference type="PROSITE" id="PS51625">
    <property type="entry name" value="SAM_MT_TRMB"/>
    <property type="match status" value="1"/>
</dbReference>
<proteinExistence type="inferred from homology"/>
<evidence type="ECO:0000250" key="1"/>
<evidence type="ECO:0000255" key="2">
    <source>
        <dbReference type="HAMAP-Rule" id="MF_01057"/>
    </source>
</evidence>
<evidence type="ECO:0000256" key="3">
    <source>
        <dbReference type="SAM" id="MobiDB-lite"/>
    </source>
</evidence>
<organism>
    <name type="scientific">Psychrobacter cryohalolentis (strain ATCC BAA-1226 / DSM 17306 / VKM B-2378 / K5)</name>
    <dbReference type="NCBI Taxonomy" id="335284"/>
    <lineage>
        <taxon>Bacteria</taxon>
        <taxon>Pseudomonadati</taxon>
        <taxon>Pseudomonadota</taxon>
        <taxon>Gammaproteobacteria</taxon>
        <taxon>Moraxellales</taxon>
        <taxon>Moraxellaceae</taxon>
        <taxon>Psychrobacter</taxon>
    </lineage>
</organism>
<protein>
    <recommendedName>
        <fullName evidence="2">tRNA (guanine-N(7)-)-methyltransferase</fullName>
        <ecNumber evidence="2">2.1.1.33</ecNumber>
    </recommendedName>
    <alternativeName>
        <fullName evidence="2">tRNA (guanine(46)-N(7))-methyltransferase</fullName>
    </alternativeName>
    <alternativeName>
        <fullName evidence="2">tRNA(m7G46)-methyltransferase</fullName>
    </alternativeName>
</protein>
<feature type="chain" id="PRO_0000288205" description="tRNA (guanine-N(7)-)-methyltransferase">
    <location>
        <begin position="1"/>
        <end position="273"/>
    </location>
</feature>
<feature type="region of interest" description="Disordered" evidence="3">
    <location>
        <begin position="1"/>
        <end position="36"/>
    </location>
</feature>
<feature type="compositionally biased region" description="Polar residues" evidence="3">
    <location>
        <begin position="1"/>
        <end position="31"/>
    </location>
</feature>
<feature type="active site" evidence="1">
    <location>
        <position position="179"/>
    </location>
</feature>
<feature type="binding site" evidence="2">
    <location>
        <position position="105"/>
    </location>
    <ligand>
        <name>S-adenosyl-L-methionine</name>
        <dbReference type="ChEBI" id="CHEBI:59789"/>
    </ligand>
</feature>
<feature type="binding site" evidence="2">
    <location>
        <position position="130"/>
    </location>
    <ligand>
        <name>S-adenosyl-L-methionine</name>
        <dbReference type="ChEBI" id="CHEBI:59789"/>
    </ligand>
</feature>
<feature type="binding site" evidence="2">
    <location>
        <position position="157"/>
    </location>
    <ligand>
        <name>S-adenosyl-L-methionine</name>
        <dbReference type="ChEBI" id="CHEBI:59789"/>
    </ligand>
</feature>
<feature type="binding site" evidence="2">
    <location>
        <position position="179"/>
    </location>
    <ligand>
        <name>S-adenosyl-L-methionine</name>
        <dbReference type="ChEBI" id="CHEBI:59789"/>
    </ligand>
</feature>
<feature type="binding site" evidence="2">
    <location>
        <position position="183"/>
    </location>
    <ligand>
        <name>substrate</name>
    </ligand>
</feature>
<feature type="binding site" evidence="2">
    <location>
        <position position="215"/>
    </location>
    <ligand>
        <name>substrate</name>
    </ligand>
</feature>
<feature type="binding site" evidence="2">
    <location>
        <begin position="252"/>
        <end position="255"/>
    </location>
    <ligand>
        <name>substrate</name>
    </ligand>
</feature>